<sequence length="726" mass="77093">MASRLVAGLQVLALAGTATAVLTWDEAYAKANTALARITQQDKVSLVSGIGWDKGPCVGNTAPVSAINYPQLCLQDGPTGVRFGTGVTAFTPGIQAASTWDVELMRQRGQFQAEEQKGCGVHVMLTPVAGALGKIPEGGRNWEGFGVDPYLAGIAMEVTIEGQQSVGVQATAKHYLLNEQELNRNTMSSNVDDRTLHELYLWPFADAVRANVASVMCSYNKINGSWACENEHAMQKLLKDELGFKGYVMSDWNAQHTTTGSANAGMDMTMPGSDFNGGNVLWGPQLNTAVNNNQVARTRLDDMARRVLAAWYLTEQDKGYPPINIRANVQGNHKENVRAVARDGIVLLKNDAGALPFKAPRRLAIVGSASVANPRGINSCVDRGCNEGALGMGWGSGTTNYPYFSAPADAIRARAQQDGATVTLSASDSTADVANTVRDADAAIVFLTSNSGEGYLLVDGSYGDRLNLDPLHNGNQLVQAVAQANKNTIVVVHSVGPLVLESILSTPGVTAVVWAGLPGQESGNALVDVLYGSVSPSGKLPYTIARATADYGTAIVPGDDNFPEGLFVDYRHFDRANIQPRFEFGYGLSYTNFTYSNIKVASTVRSGPATGPVVSGGRADLWETVATVTATVTNSGGVAGAEVAQLYVSYPKGGSVPETPPRQLRGFNKLKLAPGASGTATFNIRRRDLSYWHVGQQNWVVPAGAFGLEVGASSRDLRLKESITVV</sequence>
<accession>G4NI45</accession>
<proteinExistence type="evidence at protein level"/>
<organism>
    <name type="scientific">Pyricularia oryzae (strain 70-15 / ATCC MYA-4617 / FGSC 8958)</name>
    <name type="common">Rice blast fungus</name>
    <name type="synonym">Magnaporthe oryzae</name>
    <dbReference type="NCBI Taxonomy" id="242507"/>
    <lineage>
        <taxon>Eukaryota</taxon>
        <taxon>Fungi</taxon>
        <taxon>Dikarya</taxon>
        <taxon>Ascomycota</taxon>
        <taxon>Pezizomycotina</taxon>
        <taxon>Sordariomycetes</taxon>
        <taxon>Sordariomycetidae</taxon>
        <taxon>Magnaporthales</taxon>
        <taxon>Pyriculariaceae</taxon>
        <taxon>Pyricularia</taxon>
    </lineage>
</organism>
<evidence type="ECO:0000255" key="1"/>
<evidence type="ECO:0000255" key="2">
    <source>
        <dbReference type="PROSITE-ProRule" id="PRU00498"/>
    </source>
</evidence>
<evidence type="ECO:0000269" key="3">
    <source>
    </source>
</evidence>
<evidence type="ECO:0000303" key="4">
    <source>
    </source>
</evidence>
<evidence type="ECO:0000305" key="5"/>
<gene>
    <name evidence="4" type="primary">cel3A</name>
    <name type="ORF">MGG_09353</name>
</gene>
<protein>
    <recommendedName>
        <fullName evidence="4">Beta-glucosidase cel3A</fullName>
        <ecNumber evidence="3">3.2.1.21</ecNumber>
    </recommendedName>
    <alternativeName>
        <fullName evidence="5">Beta-D-glucoside glucohydrolase cel3A</fullName>
    </alternativeName>
    <alternativeName>
        <fullName evidence="5">Cellobiase cel3A</fullName>
    </alternativeName>
    <alternativeName>
        <fullName evidence="5">Gentiobiase cel3A</fullName>
    </alternativeName>
</protein>
<reference key="1">
    <citation type="journal article" date="2005" name="Nature">
        <title>The genome sequence of the rice blast fungus Magnaporthe grisea.</title>
        <authorList>
            <person name="Dean R.A."/>
            <person name="Talbot N.J."/>
            <person name="Ebbole D.J."/>
            <person name="Farman M.L."/>
            <person name="Mitchell T.K."/>
            <person name="Orbach M.J."/>
            <person name="Thon M.R."/>
            <person name="Kulkarni R."/>
            <person name="Xu J.-R."/>
            <person name="Pan H."/>
            <person name="Read N.D."/>
            <person name="Lee Y.-H."/>
            <person name="Carbone I."/>
            <person name="Brown D."/>
            <person name="Oh Y.Y."/>
            <person name="Donofrio N."/>
            <person name="Jeong J.S."/>
            <person name="Soanes D.M."/>
            <person name="Djonovic S."/>
            <person name="Kolomiets E."/>
            <person name="Rehmeyer C."/>
            <person name="Li W."/>
            <person name="Harding M."/>
            <person name="Kim S."/>
            <person name="Lebrun M.-H."/>
            <person name="Bohnert H."/>
            <person name="Coughlan S."/>
            <person name="Butler J."/>
            <person name="Calvo S.E."/>
            <person name="Ma L.-J."/>
            <person name="Nicol R."/>
            <person name="Purcell S."/>
            <person name="Nusbaum C."/>
            <person name="Galagan J.E."/>
            <person name="Birren B.W."/>
        </authorList>
    </citation>
    <scope>NUCLEOTIDE SEQUENCE [LARGE SCALE GENOMIC DNA]</scope>
    <source>
        <strain>70-15 / ATCC MYA-4617 / FGSC 8958</strain>
    </source>
</reference>
<reference key="2">
    <citation type="journal article" date="2011" name="Appl. Microbiol. Biotechnol.">
        <title>Biochemical characterization of Magnaporthe oryzae beta-glucosidases for efficient beta-glucan hydrolysis.</title>
        <authorList>
            <person name="Takahashi M."/>
            <person name="Konishi T."/>
            <person name="Takeda T."/>
        </authorList>
    </citation>
    <scope>FUNCTION</scope>
    <scope>CATALYTIC ACTIVITY</scope>
    <scope>BIOPHYSICOCHEMICAL PROPERTIES</scope>
    <scope>INDUCTION</scope>
</reference>
<keyword id="KW-0119">Carbohydrate metabolism</keyword>
<keyword id="KW-0136">Cellulose degradation</keyword>
<keyword id="KW-0325">Glycoprotein</keyword>
<keyword id="KW-0326">Glycosidase</keyword>
<keyword id="KW-0378">Hydrolase</keyword>
<keyword id="KW-0624">Polysaccharide degradation</keyword>
<keyword id="KW-1185">Reference proteome</keyword>
<keyword id="KW-0964">Secreted</keyword>
<keyword id="KW-0732">Signal</keyword>
<comment type="function">
    <text evidence="3">Beta-glucosidases are one of a number of cellulolytic enzymes involved in the degradation of cellulosic biomass. Catalyzes the last step releasing glucose from the inhibitory cellobiose. Has a broad substrate specificity but preferentially hydrolyzes highly polymerized 1,3- and 1,4-beta-glucans.</text>
</comment>
<comment type="catalytic activity">
    <reaction evidence="3">
        <text>Hydrolysis of terminal, non-reducing beta-D-glucosyl residues with release of beta-D-glucose.</text>
        <dbReference type="EC" id="3.2.1.21"/>
    </reaction>
</comment>
<comment type="biophysicochemical properties">
    <kinetics>
        <KM evidence="3">4.21 mM for cellobiose</KM>
        <KM evidence="3">0.59 mM for cellohexaose</KM>
        <KM evidence="3">1.95 mM for laminaribiose</KM>
        <KM evidence="3">0.47 mM for laminarihexaose</KM>
    </kinetics>
    <phDependence>
        <text evidence="3">Optimum pH is 5.5.</text>
    </phDependence>
    <temperatureDependence>
        <text evidence="3">Optimum temperature is 50 degrees Celsius.</text>
    </temperatureDependence>
</comment>
<comment type="pathway">
    <text evidence="3">Glycan metabolism; cellulose degradation.</text>
</comment>
<comment type="subcellular location">
    <subcellularLocation>
        <location evidence="5">Secreted</location>
    </subcellularLocation>
</comment>
<comment type="induction">
    <text evidence="3">The transcript levels are constant during infection.</text>
</comment>
<comment type="miscellaneous">
    <text evidence="5">The biological conversion of cellulose to glucose generally requires three types of hydrolytic enzymes: (1) Endoglucanases which cut internal beta-1,4-glucosidic bonds; (2) Exocellobiohydrolases that cut the disaccharide cellobiose from the non-reducing end of the cellulose polymer chain; (3) Beta-1,4-glucosidases which hydrolyze the cellobiose and other short cello-oligosaccharides to glucose.</text>
</comment>
<comment type="similarity">
    <text evidence="5">Belongs to the glycosyl hydrolase 3 family.</text>
</comment>
<name>CEL3A_PYRO7</name>
<dbReference type="EC" id="3.2.1.21" evidence="3"/>
<dbReference type="EMBL" id="CM001236">
    <property type="protein sequence ID" value="EHA47905.1"/>
    <property type="molecule type" value="Genomic_DNA"/>
</dbReference>
<dbReference type="RefSeq" id="XP_003720272.1">
    <property type="nucleotide sequence ID" value="XM_003720224.1"/>
</dbReference>
<dbReference type="SMR" id="G4NI45"/>
<dbReference type="STRING" id="242507.G4NI45"/>
<dbReference type="CAZy" id="GH3">
    <property type="family name" value="Glycoside Hydrolase Family 3"/>
</dbReference>
<dbReference type="GlyCosmos" id="G4NI45">
    <property type="glycosylation" value="2 sites, No reported glycans"/>
</dbReference>
<dbReference type="EnsemblFungi" id="MGG_09353T0">
    <property type="protein sequence ID" value="MGG_09353T0"/>
    <property type="gene ID" value="MGG_09353"/>
</dbReference>
<dbReference type="GeneID" id="2680435"/>
<dbReference type="KEGG" id="mgr:MGG_09353"/>
<dbReference type="VEuPathDB" id="FungiDB:MGG_09353"/>
<dbReference type="eggNOG" id="ENOG502QR4D">
    <property type="taxonomic scope" value="Eukaryota"/>
</dbReference>
<dbReference type="HOGENOM" id="CLU_004542_2_3_1"/>
<dbReference type="InParanoid" id="G4NI45"/>
<dbReference type="OMA" id="MTDWNAQ"/>
<dbReference type="OrthoDB" id="416222at2759"/>
<dbReference type="UniPathway" id="UPA00696"/>
<dbReference type="Proteomes" id="UP000009058">
    <property type="component" value="Chromosome 6"/>
</dbReference>
<dbReference type="GO" id="GO:0005576">
    <property type="term" value="C:extracellular region"/>
    <property type="evidence" value="ECO:0007669"/>
    <property type="project" value="UniProtKB-SubCell"/>
</dbReference>
<dbReference type="GO" id="GO:0008422">
    <property type="term" value="F:beta-glucosidase activity"/>
    <property type="evidence" value="ECO:0007669"/>
    <property type="project" value="UniProtKB-EC"/>
</dbReference>
<dbReference type="GO" id="GO:0030245">
    <property type="term" value="P:cellulose catabolic process"/>
    <property type="evidence" value="ECO:0007669"/>
    <property type="project" value="UniProtKB-UniPathway"/>
</dbReference>
<dbReference type="FunFam" id="2.60.40.10:FF:000757">
    <property type="entry name" value="Beta-glucosidase G"/>
    <property type="match status" value="1"/>
</dbReference>
<dbReference type="FunFam" id="3.20.20.300:FF:000002">
    <property type="entry name" value="Probable beta-glucosidase"/>
    <property type="match status" value="1"/>
</dbReference>
<dbReference type="FunFam" id="3.40.50.1700:FF:000003">
    <property type="entry name" value="Probable beta-glucosidase"/>
    <property type="match status" value="1"/>
</dbReference>
<dbReference type="Gene3D" id="3.40.50.1700">
    <property type="entry name" value="Glycoside hydrolase family 3 C-terminal domain"/>
    <property type="match status" value="1"/>
</dbReference>
<dbReference type="Gene3D" id="3.20.20.300">
    <property type="entry name" value="Glycoside hydrolase, family 3, N-terminal domain"/>
    <property type="match status" value="1"/>
</dbReference>
<dbReference type="Gene3D" id="2.60.40.10">
    <property type="entry name" value="Immunoglobulins"/>
    <property type="match status" value="1"/>
</dbReference>
<dbReference type="InterPro" id="IPR050288">
    <property type="entry name" value="Cellulose_deg_GH3"/>
</dbReference>
<dbReference type="InterPro" id="IPR026891">
    <property type="entry name" value="Fn3-like"/>
</dbReference>
<dbReference type="InterPro" id="IPR002772">
    <property type="entry name" value="Glyco_hydro_3_C"/>
</dbReference>
<dbReference type="InterPro" id="IPR036881">
    <property type="entry name" value="Glyco_hydro_3_C_sf"/>
</dbReference>
<dbReference type="InterPro" id="IPR001764">
    <property type="entry name" value="Glyco_hydro_3_N"/>
</dbReference>
<dbReference type="InterPro" id="IPR036962">
    <property type="entry name" value="Glyco_hydro_3_N_sf"/>
</dbReference>
<dbReference type="InterPro" id="IPR017853">
    <property type="entry name" value="Glycoside_hydrolase_SF"/>
</dbReference>
<dbReference type="InterPro" id="IPR013783">
    <property type="entry name" value="Ig-like_fold"/>
</dbReference>
<dbReference type="PANTHER" id="PTHR42715">
    <property type="entry name" value="BETA-GLUCOSIDASE"/>
    <property type="match status" value="1"/>
</dbReference>
<dbReference type="PANTHER" id="PTHR42715:SF28">
    <property type="entry name" value="BETA-GLUCOSIDASE L-RELATED"/>
    <property type="match status" value="1"/>
</dbReference>
<dbReference type="Pfam" id="PF14310">
    <property type="entry name" value="Fn3-like"/>
    <property type="match status" value="1"/>
</dbReference>
<dbReference type="Pfam" id="PF00933">
    <property type="entry name" value="Glyco_hydro_3"/>
    <property type="match status" value="1"/>
</dbReference>
<dbReference type="Pfam" id="PF01915">
    <property type="entry name" value="Glyco_hydro_3_C"/>
    <property type="match status" value="1"/>
</dbReference>
<dbReference type="PRINTS" id="PR00133">
    <property type="entry name" value="GLHYDRLASE3"/>
</dbReference>
<dbReference type="SMART" id="SM01217">
    <property type="entry name" value="Fn3_like"/>
    <property type="match status" value="1"/>
</dbReference>
<dbReference type="SUPFAM" id="SSF51445">
    <property type="entry name" value="(Trans)glycosidases"/>
    <property type="match status" value="1"/>
</dbReference>
<dbReference type="SUPFAM" id="SSF52279">
    <property type="entry name" value="Beta-D-glucan exohydrolase, C-terminal domain"/>
    <property type="match status" value="1"/>
</dbReference>
<feature type="signal peptide" evidence="1">
    <location>
        <begin position="1"/>
        <end position="20"/>
    </location>
</feature>
<feature type="chain" id="PRO_0000432719" description="Beta-glucosidase cel3A" evidence="1">
    <location>
        <begin position="21"/>
        <end position="726"/>
    </location>
</feature>
<feature type="glycosylation site" description="N-linked (GlcNAc...) asparagine" evidence="2">
    <location>
        <position position="223"/>
    </location>
</feature>
<feature type="glycosylation site" description="N-linked (GlcNAc...) asparagine" evidence="2">
    <location>
        <position position="592"/>
    </location>
</feature>